<protein>
    <recommendedName>
        <fullName evidence="1">Glutamyl-tRNA(Gln) amidotransferase subunit A</fullName>
        <shortName evidence="1">Glu-ADT subunit A</shortName>
        <ecNumber evidence="1">6.3.5.7</ecNumber>
    </recommendedName>
</protein>
<keyword id="KW-0067">ATP-binding</keyword>
<keyword id="KW-0436">Ligase</keyword>
<keyword id="KW-0547">Nucleotide-binding</keyword>
<keyword id="KW-0648">Protein biosynthesis</keyword>
<keyword id="KW-1185">Reference proteome</keyword>
<sequence length="481" mass="51306">MTQYTLKQAGSLLQSKQISAVELASAYLAAIAEKNPALNGYITIDQDKTLAEARAADERIAQGNASALTGVPVAYKDIFCQTGWRSACASKMLDNFIFPYTATVVQNLLDEGMVTLGRTNMDEFAMGSTNENSFYGAAKNPWNPEHVPGGSSGGSAAVVAARLAPAALGSDTGGSIRQPASHCGITGIKPTYGTVSRFGMVAYASSFDQAGPMAQTAEDCAILLNAMAGFDPKDSTSFEREKEDYTRDLDKPLKGVKIGLPKEYFSEGNSTDVQTALQNTIDLLKAQGAELVEVSLPQTKLSIPAYYVLASAEAGTNLSRYDGVRYGHRAAQFGDLEEMYGKTRAEGFGSEVKRRIMIGTYVLSHGYYDAYYLKAQKLRRLVADDFQTAFARCDLILAPTAPSAAPKIGADTSPVETYLSDIYTIAVNLAGLPALTLPAGFSGGGLPVGVQLVGNYFAEAKILGAAHQIQLNSDWHGKRPE</sequence>
<proteinExistence type="inferred from homology"/>
<evidence type="ECO:0000255" key="1">
    <source>
        <dbReference type="HAMAP-Rule" id="MF_00120"/>
    </source>
</evidence>
<feature type="chain" id="PRO_0000241120" description="Glutamyl-tRNA(Gln) amidotransferase subunit A">
    <location>
        <begin position="1"/>
        <end position="481"/>
    </location>
</feature>
<feature type="active site" description="Charge relay system" evidence="1">
    <location>
        <position position="76"/>
    </location>
</feature>
<feature type="active site" description="Charge relay system" evidence="1">
    <location>
        <position position="151"/>
    </location>
</feature>
<feature type="active site" description="Acyl-ester intermediate" evidence="1">
    <location>
        <position position="175"/>
    </location>
</feature>
<dbReference type="EC" id="6.3.5.7" evidence="1"/>
<dbReference type="EMBL" id="AE004969">
    <property type="protein sequence ID" value="AAW89389.1"/>
    <property type="molecule type" value="Genomic_DNA"/>
</dbReference>
<dbReference type="RefSeq" id="WP_010951102.1">
    <property type="nucleotide sequence ID" value="NC_002946.2"/>
</dbReference>
<dbReference type="RefSeq" id="YP_207801.1">
    <property type="nucleotide sequence ID" value="NC_002946.2"/>
</dbReference>
<dbReference type="SMR" id="Q5F8U8"/>
<dbReference type="STRING" id="242231.NGO_0662"/>
<dbReference type="KEGG" id="ngo:NGO_0662"/>
<dbReference type="PATRIC" id="fig|242231.10.peg.782"/>
<dbReference type="HOGENOM" id="CLU_009600_0_3_4"/>
<dbReference type="Proteomes" id="UP000000535">
    <property type="component" value="Chromosome"/>
</dbReference>
<dbReference type="GO" id="GO:0030956">
    <property type="term" value="C:glutamyl-tRNA(Gln) amidotransferase complex"/>
    <property type="evidence" value="ECO:0007669"/>
    <property type="project" value="InterPro"/>
</dbReference>
<dbReference type="GO" id="GO:0005524">
    <property type="term" value="F:ATP binding"/>
    <property type="evidence" value="ECO:0007669"/>
    <property type="project" value="UniProtKB-KW"/>
</dbReference>
<dbReference type="GO" id="GO:0050567">
    <property type="term" value="F:glutaminyl-tRNA synthase (glutamine-hydrolyzing) activity"/>
    <property type="evidence" value="ECO:0007669"/>
    <property type="project" value="UniProtKB-UniRule"/>
</dbReference>
<dbReference type="GO" id="GO:0006412">
    <property type="term" value="P:translation"/>
    <property type="evidence" value="ECO:0007669"/>
    <property type="project" value="UniProtKB-UniRule"/>
</dbReference>
<dbReference type="Gene3D" id="3.90.1300.10">
    <property type="entry name" value="Amidase signature (AS) domain"/>
    <property type="match status" value="1"/>
</dbReference>
<dbReference type="HAMAP" id="MF_00120">
    <property type="entry name" value="GatA"/>
    <property type="match status" value="1"/>
</dbReference>
<dbReference type="InterPro" id="IPR000120">
    <property type="entry name" value="Amidase"/>
</dbReference>
<dbReference type="InterPro" id="IPR020556">
    <property type="entry name" value="Amidase_CS"/>
</dbReference>
<dbReference type="InterPro" id="IPR023631">
    <property type="entry name" value="Amidase_dom"/>
</dbReference>
<dbReference type="InterPro" id="IPR036928">
    <property type="entry name" value="AS_sf"/>
</dbReference>
<dbReference type="InterPro" id="IPR004412">
    <property type="entry name" value="GatA"/>
</dbReference>
<dbReference type="NCBIfam" id="TIGR00132">
    <property type="entry name" value="gatA"/>
    <property type="match status" value="1"/>
</dbReference>
<dbReference type="PANTHER" id="PTHR11895:SF151">
    <property type="entry name" value="GLUTAMYL-TRNA(GLN) AMIDOTRANSFERASE SUBUNIT A"/>
    <property type="match status" value="1"/>
</dbReference>
<dbReference type="PANTHER" id="PTHR11895">
    <property type="entry name" value="TRANSAMIDASE"/>
    <property type="match status" value="1"/>
</dbReference>
<dbReference type="Pfam" id="PF01425">
    <property type="entry name" value="Amidase"/>
    <property type="match status" value="1"/>
</dbReference>
<dbReference type="SUPFAM" id="SSF75304">
    <property type="entry name" value="Amidase signature (AS) enzymes"/>
    <property type="match status" value="1"/>
</dbReference>
<dbReference type="PROSITE" id="PS00571">
    <property type="entry name" value="AMIDASES"/>
    <property type="match status" value="1"/>
</dbReference>
<comment type="function">
    <text evidence="1">Allows the formation of correctly charged Gln-tRNA(Gln) through the transamidation of misacylated Glu-tRNA(Gln) in organisms which lack glutaminyl-tRNA synthetase. The reaction takes place in the presence of glutamine and ATP through an activated gamma-phospho-Glu-tRNA(Gln).</text>
</comment>
<comment type="catalytic activity">
    <reaction evidence="1">
        <text>L-glutamyl-tRNA(Gln) + L-glutamine + ATP + H2O = L-glutaminyl-tRNA(Gln) + L-glutamate + ADP + phosphate + H(+)</text>
        <dbReference type="Rhea" id="RHEA:17521"/>
        <dbReference type="Rhea" id="RHEA-COMP:9681"/>
        <dbReference type="Rhea" id="RHEA-COMP:9684"/>
        <dbReference type="ChEBI" id="CHEBI:15377"/>
        <dbReference type="ChEBI" id="CHEBI:15378"/>
        <dbReference type="ChEBI" id="CHEBI:29985"/>
        <dbReference type="ChEBI" id="CHEBI:30616"/>
        <dbReference type="ChEBI" id="CHEBI:43474"/>
        <dbReference type="ChEBI" id="CHEBI:58359"/>
        <dbReference type="ChEBI" id="CHEBI:78520"/>
        <dbReference type="ChEBI" id="CHEBI:78521"/>
        <dbReference type="ChEBI" id="CHEBI:456216"/>
        <dbReference type="EC" id="6.3.5.7"/>
    </reaction>
</comment>
<comment type="subunit">
    <text evidence="1">Heterotrimer of A, B and C subunits.</text>
</comment>
<comment type="similarity">
    <text evidence="1">Belongs to the amidase family. GatA subfamily.</text>
</comment>
<name>GATA_NEIG1</name>
<reference key="1">
    <citation type="submission" date="2003-03" db="EMBL/GenBank/DDBJ databases">
        <title>The complete genome sequence of Neisseria gonorrhoeae.</title>
        <authorList>
            <person name="Lewis L.A."/>
            <person name="Gillaspy A.F."/>
            <person name="McLaughlin R.E."/>
            <person name="Gipson M."/>
            <person name="Ducey T.F."/>
            <person name="Ownbey T."/>
            <person name="Hartman K."/>
            <person name="Nydick C."/>
            <person name="Carson M.B."/>
            <person name="Vaughn J."/>
            <person name="Thomson C."/>
            <person name="Song L."/>
            <person name="Lin S."/>
            <person name="Yuan X."/>
            <person name="Najar F."/>
            <person name="Zhan M."/>
            <person name="Ren Q."/>
            <person name="Zhu H."/>
            <person name="Qi S."/>
            <person name="Kenton S.M."/>
            <person name="Lai H."/>
            <person name="White J.D."/>
            <person name="Clifton S."/>
            <person name="Roe B.A."/>
            <person name="Dyer D.W."/>
        </authorList>
    </citation>
    <scope>NUCLEOTIDE SEQUENCE [LARGE SCALE GENOMIC DNA]</scope>
    <source>
        <strain>ATCC 700825 / FA 1090</strain>
    </source>
</reference>
<gene>
    <name evidence="1" type="primary">gatA</name>
    <name type="ordered locus">NGO_0662</name>
</gene>
<organism>
    <name type="scientific">Neisseria gonorrhoeae (strain ATCC 700825 / FA 1090)</name>
    <dbReference type="NCBI Taxonomy" id="242231"/>
    <lineage>
        <taxon>Bacteria</taxon>
        <taxon>Pseudomonadati</taxon>
        <taxon>Pseudomonadota</taxon>
        <taxon>Betaproteobacteria</taxon>
        <taxon>Neisseriales</taxon>
        <taxon>Neisseriaceae</taxon>
        <taxon>Neisseria</taxon>
    </lineage>
</organism>
<accession>Q5F8U8</accession>